<gene>
    <name evidence="1" type="primary">greA</name>
    <name type="ordered locus">BBta_6800</name>
</gene>
<feature type="chain" id="PRO_1000094150" description="Transcription elongation factor GreA">
    <location>
        <begin position="1"/>
        <end position="158"/>
    </location>
</feature>
<feature type="coiled-coil region" evidence="1">
    <location>
        <begin position="47"/>
        <end position="74"/>
    </location>
</feature>
<proteinExistence type="inferred from homology"/>
<comment type="function">
    <text evidence="1">Necessary for efficient RNA polymerase transcription elongation past template-encoded arresting sites. The arresting sites in DNA have the property of trapping a certain fraction of elongating RNA polymerases that pass through, resulting in locked ternary complexes. Cleavage of the nascent transcript by cleavage factors such as GreA or GreB allows the resumption of elongation from the new 3'terminus. GreA releases sequences of 2 to 3 nucleotides.</text>
</comment>
<comment type="similarity">
    <text evidence="1">Belongs to the GreA/GreB family.</text>
</comment>
<name>GREA_BRASB</name>
<keyword id="KW-0175">Coiled coil</keyword>
<keyword id="KW-0238">DNA-binding</keyword>
<keyword id="KW-1185">Reference proteome</keyword>
<keyword id="KW-0804">Transcription</keyword>
<keyword id="KW-0805">Transcription regulation</keyword>
<sequence>MVEKVPMTSGGYAALENELKQRQSVDRPRIIEHIAEARSHGDLSENAEYHAAKEEQSHNEGRIAELEDKLARADVIDVTKLSGETIKFGATVTLIDEDTEKKTVWQIVGEVEADAKKGKISITSPLARALIGKKMGTTVEVMAPGGAKSYEIAKVEWR</sequence>
<evidence type="ECO:0000255" key="1">
    <source>
        <dbReference type="HAMAP-Rule" id="MF_00105"/>
    </source>
</evidence>
<reference key="1">
    <citation type="journal article" date="2007" name="Science">
        <title>Legumes symbioses: absence of nod genes in photosynthetic bradyrhizobia.</title>
        <authorList>
            <person name="Giraud E."/>
            <person name="Moulin L."/>
            <person name="Vallenet D."/>
            <person name="Barbe V."/>
            <person name="Cytryn E."/>
            <person name="Avarre J.-C."/>
            <person name="Jaubert M."/>
            <person name="Simon D."/>
            <person name="Cartieaux F."/>
            <person name="Prin Y."/>
            <person name="Bena G."/>
            <person name="Hannibal L."/>
            <person name="Fardoux J."/>
            <person name="Kojadinovic M."/>
            <person name="Vuillet L."/>
            <person name="Lajus A."/>
            <person name="Cruveiller S."/>
            <person name="Rouy Z."/>
            <person name="Mangenot S."/>
            <person name="Segurens B."/>
            <person name="Dossat C."/>
            <person name="Franck W.L."/>
            <person name="Chang W.-S."/>
            <person name="Saunders E."/>
            <person name="Bruce D."/>
            <person name="Richardson P."/>
            <person name="Normand P."/>
            <person name="Dreyfus B."/>
            <person name="Pignol D."/>
            <person name="Stacey G."/>
            <person name="Emerich D."/>
            <person name="Vermeglio A."/>
            <person name="Medigue C."/>
            <person name="Sadowsky M."/>
        </authorList>
    </citation>
    <scope>NUCLEOTIDE SEQUENCE [LARGE SCALE GENOMIC DNA]</scope>
    <source>
        <strain>BTAi1 / ATCC BAA-1182</strain>
    </source>
</reference>
<protein>
    <recommendedName>
        <fullName evidence="1">Transcription elongation factor GreA</fullName>
    </recommendedName>
    <alternativeName>
        <fullName evidence="1">Transcript cleavage factor GreA</fullName>
    </alternativeName>
</protein>
<organism>
    <name type="scientific">Bradyrhizobium sp. (strain BTAi1 / ATCC BAA-1182)</name>
    <dbReference type="NCBI Taxonomy" id="288000"/>
    <lineage>
        <taxon>Bacteria</taxon>
        <taxon>Pseudomonadati</taxon>
        <taxon>Pseudomonadota</taxon>
        <taxon>Alphaproteobacteria</taxon>
        <taxon>Hyphomicrobiales</taxon>
        <taxon>Nitrobacteraceae</taxon>
        <taxon>Bradyrhizobium</taxon>
    </lineage>
</organism>
<dbReference type="EMBL" id="CP000494">
    <property type="protein sequence ID" value="ABQ38690.1"/>
    <property type="molecule type" value="Genomic_DNA"/>
</dbReference>
<dbReference type="RefSeq" id="WP_012046626.1">
    <property type="nucleotide sequence ID" value="NC_009485.1"/>
</dbReference>
<dbReference type="SMR" id="A5ER96"/>
<dbReference type="STRING" id="288000.BBta_6800"/>
<dbReference type="KEGG" id="bbt:BBta_6800"/>
<dbReference type="eggNOG" id="COG0782">
    <property type="taxonomic scope" value="Bacteria"/>
</dbReference>
<dbReference type="HOGENOM" id="CLU_101379_2_0_5"/>
<dbReference type="OrthoDB" id="9808774at2"/>
<dbReference type="Proteomes" id="UP000000246">
    <property type="component" value="Chromosome"/>
</dbReference>
<dbReference type="GO" id="GO:0003677">
    <property type="term" value="F:DNA binding"/>
    <property type="evidence" value="ECO:0007669"/>
    <property type="project" value="UniProtKB-UniRule"/>
</dbReference>
<dbReference type="GO" id="GO:0070063">
    <property type="term" value="F:RNA polymerase binding"/>
    <property type="evidence" value="ECO:0007669"/>
    <property type="project" value="InterPro"/>
</dbReference>
<dbReference type="GO" id="GO:0006354">
    <property type="term" value="P:DNA-templated transcription elongation"/>
    <property type="evidence" value="ECO:0007669"/>
    <property type="project" value="TreeGrafter"/>
</dbReference>
<dbReference type="GO" id="GO:0032784">
    <property type="term" value="P:regulation of DNA-templated transcription elongation"/>
    <property type="evidence" value="ECO:0007669"/>
    <property type="project" value="UniProtKB-UniRule"/>
</dbReference>
<dbReference type="FunFam" id="1.10.287.180:FF:000001">
    <property type="entry name" value="Transcription elongation factor GreA"/>
    <property type="match status" value="1"/>
</dbReference>
<dbReference type="FunFam" id="3.10.50.30:FF:000001">
    <property type="entry name" value="Transcription elongation factor GreA"/>
    <property type="match status" value="1"/>
</dbReference>
<dbReference type="Gene3D" id="3.10.50.30">
    <property type="entry name" value="Transcription elongation factor, GreA/GreB, C-terminal domain"/>
    <property type="match status" value="1"/>
</dbReference>
<dbReference type="Gene3D" id="1.10.287.180">
    <property type="entry name" value="Transcription elongation factor, GreA/GreB, N-terminal domain"/>
    <property type="match status" value="1"/>
</dbReference>
<dbReference type="HAMAP" id="MF_00105">
    <property type="entry name" value="GreA_GreB"/>
    <property type="match status" value="1"/>
</dbReference>
<dbReference type="InterPro" id="IPR036953">
    <property type="entry name" value="GreA/GreB_C_sf"/>
</dbReference>
<dbReference type="InterPro" id="IPR018151">
    <property type="entry name" value="TF_GreA/GreB_CS"/>
</dbReference>
<dbReference type="InterPro" id="IPR006359">
    <property type="entry name" value="Tscrpt_elong_fac_GreA"/>
</dbReference>
<dbReference type="InterPro" id="IPR028624">
    <property type="entry name" value="Tscrpt_elong_fac_GreA/B"/>
</dbReference>
<dbReference type="InterPro" id="IPR001437">
    <property type="entry name" value="Tscrpt_elong_fac_GreA/B_C"/>
</dbReference>
<dbReference type="InterPro" id="IPR023459">
    <property type="entry name" value="Tscrpt_elong_fac_GreA/B_fam"/>
</dbReference>
<dbReference type="InterPro" id="IPR022691">
    <property type="entry name" value="Tscrpt_elong_fac_GreA/B_N"/>
</dbReference>
<dbReference type="InterPro" id="IPR036805">
    <property type="entry name" value="Tscrpt_elong_fac_GreA/B_N_sf"/>
</dbReference>
<dbReference type="NCBIfam" id="TIGR01462">
    <property type="entry name" value="greA"/>
    <property type="match status" value="1"/>
</dbReference>
<dbReference type="NCBIfam" id="NF001261">
    <property type="entry name" value="PRK00226.1-2"/>
    <property type="match status" value="1"/>
</dbReference>
<dbReference type="NCBIfam" id="NF001263">
    <property type="entry name" value="PRK00226.1-4"/>
    <property type="match status" value="1"/>
</dbReference>
<dbReference type="NCBIfam" id="NF001264">
    <property type="entry name" value="PRK00226.1-5"/>
    <property type="match status" value="1"/>
</dbReference>
<dbReference type="PANTHER" id="PTHR30437">
    <property type="entry name" value="TRANSCRIPTION ELONGATION FACTOR GREA"/>
    <property type="match status" value="1"/>
</dbReference>
<dbReference type="PANTHER" id="PTHR30437:SF4">
    <property type="entry name" value="TRANSCRIPTION ELONGATION FACTOR GREA"/>
    <property type="match status" value="1"/>
</dbReference>
<dbReference type="Pfam" id="PF01272">
    <property type="entry name" value="GreA_GreB"/>
    <property type="match status" value="1"/>
</dbReference>
<dbReference type="Pfam" id="PF03449">
    <property type="entry name" value="GreA_GreB_N"/>
    <property type="match status" value="1"/>
</dbReference>
<dbReference type="PIRSF" id="PIRSF006092">
    <property type="entry name" value="GreA_GreB"/>
    <property type="match status" value="1"/>
</dbReference>
<dbReference type="SUPFAM" id="SSF54534">
    <property type="entry name" value="FKBP-like"/>
    <property type="match status" value="1"/>
</dbReference>
<dbReference type="SUPFAM" id="SSF46557">
    <property type="entry name" value="GreA transcript cleavage protein, N-terminal domain"/>
    <property type="match status" value="1"/>
</dbReference>
<dbReference type="PROSITE" id="PS00829">
    <property type="entry name" value="GREAB_1"/>
    <property type="match status" value="1"/>
</dbReference>
<accession>A5ER96</accession>